<keyword id="KW-0903">Direct protein sequencing</keyword>
<keyword id="KW-0378">Hydrolase</keyword>
<keyword id="KW-0645">Protease</keyword>
<keyword id="KW-0964">Secreted</keyword>
<keyword id="KW-0720">Serine protease</keyword>
<reference key="1">
    <citation type="journal article" date="1976" name="Methods Enzymol.">
        <title>Thermomycolin.</title>
        <authorList>
            <person name="Gaucher G.M."/>
            <person name="Stevenson K.J."/>
        </authorList>
    </citation>
    <scope>PROTEIN SEQUENCE</scope>
    <scope>ACTIVE SITE</scope>
</reference>
<reference key="2">
    <citation type="journal article" date="1974" name="Can. J. Biochem.">
        <title>Physiochemical properties of thermomycolase, the thermostable, extracellular, serine protease of the fungus Malbranchea pulchella.</title>
        <authorList>
            <person name="Voordouw G."/>
            <person name="Gaucher G.M."/>
            <person name="Roche R.S."/>
        </authorList>
    </citation>
    <scope>CHARACTERIZATION</scope>
</reference>
<reference key="3">
    <citation type="journal article" date="1975" name="Biochem. J.">
        <title>The substrate specificity of thermomycolase, an extracellular serine proteinase from the thermophilic fungus Malbranchea pulchella var. sulfurea.</title>
        <authorList>
            <person name="Stevenson K.J."/>
            <person name="Gaucher G.M."/>
        </authorList>
    </citation>
    <scope>CHARACTERIZATION</scope>
</reference>
<dbReference type="EC" id="3.4.21.65"/>
<dbReference type="PIR" id="A24174">
    <property type="entry name" value="A24174"/>
</dbReference>
<dbReference type="SMR" id="P13858"/>
<dbReference type="MEROPS" id="S08.057"/>
<dbReference type="GO" id="GO:0005576">
    <property type="term" value="C:extracellular region"/>
    <property type="evidence" value="ECO:0007669"/>
    <property type="project" value="UniProtKB-SubCell"/>
</dbReference>
<dbReference type="GO" id="GO:0008236">
    <property type="term" value="F:serine-type peptidase activity"/>
    <property type="evidence" value="ECO:0007669"/>
    <property type="project" value="UniProtKB-KW"/>
</dbReference>
<dbReference type="GO" id="GO:0006508">
    <property type="term" value="P:proteolysis"/>
    <property type="evidence" value="ECO:0007669"/>
    <property type="project" value="UniProtKB-KW"/>
</dbReference>
<protein>
    <recommendedName>
        <fullName>Thermomycolin</fullName>
        <ecNumber>3.4.21.65</ecNumber>
    </recommendedName>
    <alternativeName>
        <fullName>Thermomycolase</fullName>
    </alternativeName>
</protein>
<proteinExistence type="evidence at protein level"/>
<feature type="chain" id="PRO_0000076420" description="Thermomycolin">
    <location>
        <begin position="1"/>
        <end position="34" status="greater than"/>
    </location>
</feature>
<feature type="active site" description="Charge relay system" evidence="1 2 3 4">
    <location>
        <position position="33"/>
    </location>
</feature>
<feature type="unsure residue">
    <location>
        <position position="6"/>
    </location>
</feature>
<feature type="unsure residue">
    <location>
        <position position="10"/>
    </location>
</feature>
<feature type="unsure residue">
    <location>
        <position position="17"/>
    </location>
</feature>
<feature type="unsure residue">
    <location>
        <position position="31"/>
    </location>
</feature>
<feature type="non-consecutive residues" evidence="5">
    <location>
        <begin position="28"/>
        <end position="29"/>
    </location>
</feature>
<feature type="non-terminal residue">
    <location>
        <position position="34"/>
    </location>
</feature>
<name>THEM_MALCI</name>
<sequence length="34" mass="3708">ALVTQSNAPSWGLGRISNRQAGIRDYHYLSGTSM</sequence>
<organism>
    <name type="scientific">Malbranchea cinnamomea</name>
    <name type="common">Thermophilic fungus</name>
    <name type="synonym">Malbranchea sulfurea</name>
    <dbReference type="NCBI Taxonomy" id="5041"/>
    <lineage>
        <taxon>Eukaryota</taxon>
        <taxon>Fungi</taxon>
        <taxon>Dikarya</taxon>
        <taxon>Ascomycota</taxon>
        <taxon>Pezizomycotina</taxon>
        <taxon>Eurotiomycetes</taxon>
        <taxon>Eurotiomycetidae</taxon>
        <taxon>Onygenales</taxon>
        <taxon>Malbrancheaceae</taxon>
        <taxon>Malbranchea</taxon>
    </lineage>
</organism>
<evidence type="ECO:0000255" key="1">
    <source>
        <dbReference type="PROSITE-ProRule" id="PRU10080"/>
    </source>
</evidence>
<evidence type="ECO:0000255" key="2">
    <source>
        <dbReference type="PROSITE-ProRule" id="PRU10081"/>
    </source>
</evidence>
<evidence type="ECO:0000255" key="3">
    <source>
        <dbReference type="PROSITE-ProRule" id="PRU10082"/>
    </source>
</evidence>
<evidence type="ECO:0000269" key="4">
    <source>
    </source>
</evidence>
<evidence type="ECO:0000305" key="5"/>
<accession>P13858</accession>
<comment type="function">
    <text>This is an extracellular proteinase with a general specificity for apolar residues.</text>
</comment>
<comment type="catalytic activity">
    <reaction>
        <text>Rather non-specific hydrolysis of proteins. Preferential cleavage: -Ala-|-Xaa-, -Tyr-|-Xaa-, -Phe-|-Xaa- in small molecular substrates.</text>
        <dbReference type="EC" id="3.4.21.65"/>
    </reaction>
</comment>
<comment type="biophysicochemical properties">
    <temperatureDependence>
        <text>Thermostable.</text>
    </temperatureDependence>
</comment>
<comment type="subcellular location">
    <subcellularLocation>
        <location>Secreted</location>
    </subcellularLocation>
</comment>
<comment type="similarity">
    <text evidence="5">Belongs to the peptidase S8 family.</text>
</comment>